<accession>A1AVM5</accession>
<comment type="function">
    <text evidence="1">DNA-dependent RNA polymerase catalyzes the transcription of DNA into RNA using the four ribonucleoside triphosphates as substrates.</text>
</comment>
<comment type="catalytic activity">
    <reaction evidence="1">
        <text>RNA(n) + a ribonucleoside 5'-triphosphate = RNA(n+1) + diphosphate</text>
        <dbReference type="Rhea" id="RHEA:21248"/>
        <dbReference type="Rhea" id="RHEA-COMP:14527"/>
        <dbReference type="Rhea" id="RHEA-COMP:17342"/>
        <dbReference type="ChEBI" id="CHEBI:33019"/>
        <dbReference type="ChEBI" id="CHEBI:61557"/>
        <dbReference type="ChEBI" id="CHEBI:140395"/>
        <dbReference type="EC" id="2.7.7.6"/>
    </reaction>
</comment>
<comment type="subunit">
    <text evidence="1">Homodimer. The RNAP catalytic core consists of 2 alpha, 1 beta, 1 beta' and 1 omega subunit. When a sigma factor is associated with the core the holoenzyme is formed, which can initiate transcription.</text>
</comment>
<comment type="domain">
    <text evidence="1">The N-terminal domain is essential for RNAP assembly and basal transcription, whereas the C-terminal domain is involved in interaction with transcriptional regulators and with upstream promoter elements.</text>
</comment>
<comment type="similarity">
    <text evidence="1">Belongs to the RNA polymerase alpha chain family.</text>
</comment>
<evidence type="ECO:0000255" key="1">
    <source>
        <dbReference type="HAMAP-Rule" id="MF_00059"/>
    </source>
</evidence>
<gene>
    <name evidence="1" type="primary">rpoA</name>
    <name type="ordered locus">Rmag_0190</name>
</gene>
<dbReference type="EC" id="2.7.7.6" evidence="1"/>
<dbReference type="EMBL" id="CP000488">
    <property type="protein sequence ID" value="ABL01982.1"/>
    <property type="molecule type" value="Genomic_DNA"/>
</dbReference>
<dbReference type="RefSeq" id="WP_011737607.1">
    <property type="nucleotide sequence ID" value="NC_008610.1"/>
</dbReference>
<dbReference type="SMR" id="A1AVM5"/>
<dbReference type="STRING" id="413404.Rmag_0190"/>
<dbReference type="KEGG" id="rma:Rmag_0190"/>
<dbReference type="eggNOG" id="COG0202">
    <property type="taxonomic scope" value="Bacteria"/>
</dbReference>
<dbReference type="HOGENOM" id="CLU_053084_0_0_6"/>
<dbReference type="OrthoDB" id="9805706at2"/>
<dbReference type="Proteomes" id="UP000002587">
    <property type="component" value="Chromosome"/>
</dbReference>
<dbReference type="GO" id="GO:0005737">
    <property type="term" value="C:cytoplasm"/>
    <property type="evidence" value="ECO:0007669"/>
    <property type="project" value="UniProtKB-ARBA"/>
</dbReference>
<dbReference type="GO" id="GO:0000428">
    <property type="term" value="C:DNA-directed RNA polymerase complex"/>
    <property type="evidence" value="ECO:0007669"/>
    <property type="project" value="UniProtKB-KW"/>
</dbReference>
<dbReference type="GO" id="GO:0003677">
    <property type="term" value="F:DNA binding"/>
    <property type="evidence" value="ECO:0007669"/>
    <property type="project" value="UniProtKB-UniRule"/>
</dbReference>
<dbReference type="GO" id="GO:0003899">
    <property type="term" value="F:DNA-directed RNA polymerase activity"/>
    <property type="evidence" value="ECO:0007669"/>
    <property type="project" value="UniProtKB-UniRule"/>
</dbReference>
<dbReference type="GO" id="GO:0046983">
    <property type="term" value="F:protein dimerization activity"/>
    <property type="evidence" value="ECO:0007669"/>
    <property type="project" value="InterPro"/>
</dbReference>
<dbReference type="GO" id="GO:0006351">
    <property type="term" value="P:DNA-templated transcription"/>
    <property type="evidence" value="ECO:0007669"/>
    <property type="project" value="UniProtKB-UniRule"/>
</dbReference>
<dbReference type="CDD" id="cd06928">
    <property type="entry name" value="RNAP_alpha_NTD"/>
    <property type="match status" value="1"/>
</dbReference>
<dbReference type="FunFam" id="1.10.150.20:FF:000001">
    <property type="entry name" value="DNA-directed RNA polymerase subunit alpha"/>
    <property type="match status" value="1"/>
</dbReference>
<dbReference type="FunFam" id="2.170.120.12:FF:000001">
    <property type="entry name" value="DNA-directed RNA polymerase subunit alpha"/>
    <property type="match status" value="1"/>
</dbReference>
<dbReference type="Gene3D" id="1.10.150.20">
    <property type="entry name" value="5' to 3' exonuclease, C-terminal subdomain"/>
    <property type="match status" value="1"/>
</dbReference>
<dbReference type="Gene3D" id="2.170.120.12">
    <property type="entry name" value="DNA-directed RNA polymerase, insert domain"/>
    <property type="match status" value="1"/>
</dbReference>
<dbReference type="Gene3D" id="3.30.1360.10">
    <property type="entry name" value="RNA polymerase, RBP11-like subunit"/>
    <property type="match status" value="1"/>
</dbReference>
<dbReference type="HAMAP" id="MF_00059">
    <property type="entry name" value="RNApol_bact_RpoA"/>
    <property type="match status" value="1"/>
</dbReference>
<dbReference type="InterPro" id="IPR011262">
    <property type="entry name" value="DNA-dir_RNA_pol_insert"/>
</dbReference>
<dbReference type="InterPro" id="IPR011263">
    <property type="entry name" value="DNA-dir_RNA_pol_RpoA/D/Rpb3"/>
</dbReference>
<dbReference type="InterPro" id="IPR011773">
    <property type="entry name" value="DNA-dir_RpoA"/>
</dbReference>
<dbReference type="InterPro" id="IPR036603">
    <property type="entry name" value="RBP11-like"/>
</dbReference>
<dbReference type="InterPro" id="IPR011260">
    <property type="entry name" value="RNAP_asu_C"/>
</dbReference>
<dbReference type="InterPro" id="IPR036643">
    <property type="entry name" value="RNApol_insert_sf"/>
</dbReference>
<dbReference type="NCBIfam" id="NF003513">
    <property type="entry name" value="PRK05182.1-2"/>
    <property type="match status" value="1"/>
</dbReference>
<dbReference type="NCBIfam" id="NF003519">
    <property type="entry name" value="PRK05182.2-5"/>
    <property type="match status" value="1"/>
</dbReference>
<dbReference type="NCBIfam" id="TIGR02027">
    <property type="entry name" value="rpoA"/>
    <property type="match status" value="1"/>
</dbReference>
<dbReference type="Pfam" id="PF01000">
    <property type="entry name" value="RNA_pol_A_bac"/>
    <property type="match status" value="1"/>
</dbReference>
<dbReference type="Pfam" id="PF03118">
    <property type="entry name" value="RNA_pol_A_CTD"/>
    <property type="match status" value="1"/>
</dbReference>
<dbReference type="Pfam" id="PF01193">
    <property type="entry name" value="RNA_pol_L"/>
    <property type="match status" value="1"/>
</dbReference>
<dbReference type="SMART" id="SM00662">
    <property type="entry name" value="RPOLD"/>
    <property type="match status" value="1"/>
</dbReference>
<dbReference type="SUPFAM" id="SSF47789">
    <property type="entry name" value="C-terminal domain of RNA polymerase alpha subunit"/>
    <property type="match status" value="1"/>
</dbReference>
<dbReference type="SUPFAM" id="SSF56553">
    <property type="entry name" value="Insert subdomain of RNA polymerase alpha subunit"/>
    <property type="match status" value="1"/>
</dbReference>
<dbReference type="SUPFAM" id="SSF55257">
    <property type="entry name" value="RBP11-like subunits of RNA polymerase"/>
    <property type="match status" value="1"/>
</dbReference>
<reference key="1">
    <citation type="journal article" date="2007" name="Science">
        <title>The Calyptogena magnifica chemoautotrophic symbiont genome.</title>
        <authorList>
            <person name="Newton I.L.G."/>
            <person name="Woyke T."/>
            <person name="Auchtung T.A."/>
            <person name="Dilly G.F."/>
            <person name="Dutton R.J."/>
            <person name="Fisher M.C."/>
            <person name="Fontanez K.M."/>
            <person name="Lau E."/>
            <person name="Stewart F.J."/>
            <person name="Richardson P.M."/>
            <person name="Barry K.W."/>
            <person name="Saunders E."/>
            <person name="Detter J.C."/>
            <person name="Wu D."/>
            <person name="Eisen J.A."/>
            <person name="Cavanaugh C.M."/>
        </authorList>
    </citation>
    <scope>NUCLEOTIDE SEQUENCE [LARGE SCALE GENOMIC DNA]</scope>
</reference>
<name>RPOA_RUTMC</name>
<protein>
    <recommendedName>
        <fullName evidence="1">DNA-directed RNA polymerase subunit alpha</fullName>
        <shortName evidence="1">RNAP subunit alpha</shortName>
        <ecNumber evidence="1">2.7.7.6</ecNumber>
    </recommendedName>
    <alternativeName>
        <fullName evidence="1">RNA polymerase subunit alpha</fullName>
    </alternativeName>
    <alternativeName>
        <fullName evidence="1">Transcriptase subunit alpha</fullName>
    </alternativeName>
</protein>
<organism>
    <name type="scientific">Ruthia magnifica subsp. Calyptogena magnifica</name>
    <dbReference type="NCBI Taxonomy" id="413404"/>
    <lineage>
        <taxon>Bacteria</taxon>
        <taxon>Pseudomonadati</taxon>
        <taxon>Pseudomonadota</taxon>
        <taxon>Gammaproteobacteria</taxon>
        <taxon>Candidatus Pseudothioglobaceae</taxon>
        <taxon>Candidatus Ruthturnera</taxon>
    </lineage>
</organism>
<sequence length="326" mass="35693">MQGSARNFLKPKLVESSQTGVNEFKVILEPLERGFGHTLGNALRRTLLSSMTGSAVTEVAIDGVMHEFSTIEGVQEDVLDILLNLKEVSVMLNTAETAQVVIEKKGPCEITVADIEANGIDITAFNPDKVIATINDESHMRMTLKISTGIGYDTATSRTDEASSIGGMQLDASFSPIRRVSFTVDAARVKQKVNLDKLNITIETNGSVNAEVAIKRAAIILQEQLSSFVELELVEEEEALPTSEDFDPQLLAAVDELELTVRSANCLKAEQIYYIGDLIQKSEQDLLRTPNLGRKSLNEIKEVLTEKGLNLATSIENWPPVDLMSE</sequence>
<proteinExistence type="inferred from homology"/>
<feature type="chain" id="PRO_0000296863" description="DNA-directed RNA polymerase subunit alpha">
    <location>
        <begin position="1"/>
        <end position="326"/>
    </location>
</feature>
<feature type="region of interest" description="Alpha N-terminal domain (alpha-NTD)" evidence="1">
    <location>
        <begin position="1"/>
        <end position="232"/>
    </location>
</feature>
<feature type="region of interest" description="Alpha C-terminal domain (alpha-CTD)" evidence="1">
    <location>
        <begin position="246"/>
        <end position="326"/>
    </location>
</feature>
<keyword id="KW-0240">DNA-directed RNA polymerase</keyword>
<keyword id="KW-0548">Nucleotidyltransferase</keyword>
<keyword id="KW-0804">Transcription</keyword>
<keyword id="KW-0808">Transferase</keyword>